<sequence>MTNIRKTHPPIKIINHSFIDLPAPSNISAWWTFGSLLGLCLLIQILTGLFLAMHYTSDTMTAFSSVTHICRDVNYGWLIRYMHANGASMFFICLFLHVGRGLYYGSYTYLETWNIGVILLFAVMATAFMGYVLPWGQMSFWGATVITNLMSAIPYIGTTLVEWIWGGFSVDKATLTRFFAFHFILPFIVAALVMVHLLFLPETGSNNPSCLISDSDKIPFHPYYTIKDVLGVLLLLLLFMMLVLFSPDLLGDPDNYTPANPLNTPPHIKPEWYFLFAYAILRSIPNKLGGVLALVFSILILMLFPILHMSKQRSMMFRPLSQCLFWILVADLFTLTWIGGQPVEYPFITIGQVASILYFTIILLALPSISMLENKLLKW</sequence>
<protein>
    <recommendedName>
        <fullName>Cytochrome b</fullName>
    </recommendedName>
    <alternativeName>
        <fullName>Complex III subunit 3</fullName>
    </alternativeName>
    <alternativeName>
        <fullName>Complex III subunit III</fullName>
    </alternativeName>
    <alternativeName>
        <fullName>Cytochrome b-c1 complex subunit 3</fullName>
    </alternativeName>
    <alternativeName>
        <fullName>Ubiquinol-cytochrome-c reductase complex cytochrome b subunit</fullName>
    </alternativeName>
</protein>
<keyword id="KW-0249">Electron transport</keyword>
<keyword id="KW-0349">Heme</keyword>
<keyword id="KW-0408">Iron</keyword>
<keyword id="KW-0472">Membrane</keyword>
<keyword id="KW-0479">Metal-binding</keyword>
<keyword id="KW-0496">Mitochondrion</keyword>
<keyword id="KW-0999">Mitochondrion inner membrane</keyword>
<keyword id="KW-0679">Respiratory chain</keyword>
<keyword id="KW-0812">Transmembrane</keyword>
<keyword id="KW-1133">Transmembrane helix</keyword>
<keyword id="KW-0813">Transport</keyword>
<keyword id="KW-0830">Ubiquinone</keyword>
<dbReference type="EMBL" id="U10180">
    <property type="protein sequence ID" value="AAB05574.1"/>
    <property type="molecule type" value="Genomic_DNA"/>
</dbReference>
<dbReference type="SMR" id="Q35895"/>
<dbReference type="GO" id="GO:0005743">
    <property type="term" value="C:mitochondrial inner membrane"/>
    <property type="evidence" value="ECO:0007669"/>
    <property type="project" value="UniProtKB-SubCell"/>
</dbReference>
<dbReference type="GO" id="GO:0045275">
    <property type="term" value="C:respiratory chain complex III"/>
    <property type="evidence" value="ECO:0007669"/>
    <property type="project" value="InterPro"/>
</dbReference>
<dbReference type="GO" id="GO:0046872">
    <property type="term" value="F:metal ion binding"/>
    <property type="evidence" value="ECO:0007669"/>
    <property type="project" value="UniProtKB-KW"/>
</dbReference>
<dbReference type="GO" id="GO:0008121">
    <property type="term" value="F:ubiquinol-cytochrome-c reductase activity"/>
    <property type="evidence" value="ECO:0007669"/>
    <property type="project" value="InterPro"/>
</dbReference>
<dbReference type="GO" id="GO:0006122">
    <property type="term" value="P:mitochondrial electron transport, ubiquinol to cytochrome c"/>
    <property type="evidence" value="ECO:0007669"/>
    <property type="project" value="TreeGrafter"/>
</dbReference>
<dbReference type="CDD" id="cd00290">
    <property type="entry name" value="cytochrome_b_C"/>
    <property type="match status" value="1"/>
</dbReference>
<dbReference type="CDD" id="cd00284">
    <property type="entry name" value="Cytochrome_b_N"/>
    <property type="match status" value="1"/>
</dbReference>
<dbReference type="FunFam" id="1.20.810.10:FF:000002">
    <property type="entry name" value="Cytochrome b"/>
    <property type="match status" value="1"/>
</dbReference>
<dbReference type="Gene3D" id="1.20.810.10">
    <property type="entry name" value="Cytochrome Bc1 Complex, Chain C"/>
    <property type="match status" value="1"/>
</dbReference>
<dbReference type="InterPro" id="IPR005798">
    <property type="entry name" value="Cyt_b/b6_C"/>
</dbReference>
<dbReference type="InterPro" id="IPR036150">
    <property type="entry name" value="Cyt_b/b6_C_sf"/>
</dbReference>
<dbReference type="InterPro" id="IPR005797">
    <property type="entry name" value="Cyt_b/b6_N"/>
</dbReference>
<dbReference type="InterPro" id="IPR027387">
    <property type="entry name" value="Cytb/b6-like_sf"/>
</dbReference>
<dbReference type="InterPro" id="IPR030689">
    <property type="entry name" value="Cytochrome_b"/>
</dbReference>
<dbReference type="InterPro" id="IPR048260">
    <property type="entry name" value="Cytochrome_b_C_euk/bac"/>
</dbReference>
<dbReference type="InterPro" id="IPR048259">
    <property type="entry name" value="Cytochrome_b_N_euk/bac"/>
</dbReference>
<dbReference type="InterPro" id="IPR016174">
    <property type="entry name" value="Di-haem_cyt_TM"/>
</dbReference>
<dbReference type="PANTHER" id="PTHR19271">
    <property type="entry name" value="CYTOCHROME B"/>
    <property type="match status" value="1"/>
</dbReference>
<dbReference type="PANTHER" id="PTHR19271:SF16">
    <property type="entry name" value="CYTOCHROME B"/>
    <property type="match status" value="1"/>
</dbReference>
<dbReference type="Pfam" id="PF00032">
    <property type="entry name" value="Cytochrom_B_C"/>
    <property type="match status" value="1"/>
</dbReference>
<dbReference type="Pfam" id="PF00033">
    <property type="entry name" value="Cytochrome_B"/>
    <property type="match status" value="1"/>
</dbReference>
<dbReference type="PIRSF" id="PIRSF038885">
    <property type="entry name" value="COB"/>
    <property type="match status" value="1"/>
</dbReference>
<dbReference type="SUPFAM" id="SSF81648">
    <property type="entry name" value="a domain/subunit of cytochrome bc1 complex (Ubiquinol-cytochrome c reductase)"/>
    <property type="match status" value="1"/>
</dbReference>
<dbReference type="SUPFAM" id="SSF81342">
    <property type="entry name" value="Transmembrane di-heme cytochromes"/>
    <property type="match status" value="1"/>
</dbReference>
<dbReference type="PROSITE" id="PS51003">
    <property type="entry name" value="CYTB_CTER"/>
    <property type="match status" value="1"/>
</dbReference>
<dbReference type="PROSITE" id="PS51002">
    <property type="entry name" value="CYTB_NTER"/>
    <property type="match status" value="1"/>
</dbReference>
<evidence type="ECO:0000250" key="1"/>
<evidence type="ECO:0000250" key="2">
    <source>
        <dbReference type="UniProtKB" id="P00157"/>
    </source>
</evidence>
<evidence type="ECO:0000255" key="3">
    <source>
        <dbReference type="PROSITE-ProRule" id="PRU00967"/>
    </source>
</evidence>
<evidence type="ECO:0000255" key="4">
    <source>
        <dbReference type="PROSITE-ProRule" id="PRU00968"/>
    </source>
</evidence>
<feature type="chain" id="PRO_0000061530" description="Cytochrome b">
    <location>
        <begin position="1"/>
        <end position="379"/>
    </location>
</feature>
<feature type="transmembrane region" description="Helical" evidence="2">
    <location>
        <begin position="33"/>
        <end position="53"/>
    </location>
</feature>
<feature type="transmembrane region" description="Helical" evidence="2">
    <location>
        <begin position="77"/>
        <end position="98"/>
    </location>
</feature>
<feature type="transmembrane region" description="Helical" evidence="2">
    <location>
        <begin position="113"/>
        <end position="133"/>
    </location>
</feature>
<feature type="transmembrane region" description="Helical" evidence="2">
    <location>
        <begin position="178"/>
        <end position="198"/>
    </location>
</feature>
<feature type="transmembrane region" description="Helical" evidence="2">
    <location>
        <begin position="226"/>
        <end position="246"/>
    </location>
</feature>
<feature type="transmembrane region" description="Helical" evidence="2">
    <location>
        <begin position="288"/>
        <end position="308"/>
    </location>
</feature>
<feature type="transmembrane region" description="Helical" evidence="2">
    <location>
        <begin position="320"/>
        <end position="340"/>
    </location>
</feature>
<feature type="transmembrane region" description="Helical" evidence="2">
    <location>
        <begin position="347"/>
        <end position="367"/>
    </location>
</feature>
<feature type="binding site" description="axial binding residue" evidence="2">
    <location>
        <position position="83"/>
    </location>
    <ligand>
        <name>heme b</name>
        <dbReference type="ChEBI" id="CHEBI:60344"/>
        <label>b562</label>
    </ligand>
    <ligandPart>
        <name>Fe</name>
        <dbReference type="ChEBI" id="CHEBI:18248"/>
    </ligandPart>
</feature>
<feature type="binding site" description="axial binding residue" evidence="2">
    <location>
        <position position="97"/>
    </location>
    <ligand>
        <name>heme b</name>
        <dbReference type="ChEBI" id="CHEBI:60344"/>
        <label>b566</label>
    </ligand>
    <ligandPart>
        <name>Fe</name>
        <dbReference type="ChEBI" id="CHEBI:18248"/>
    </ligandPart>
</feature>
<feature type="binding site" description="axial binding residue" evidence="2">
    <location>
        <position position="182"/>
    </location>
    <ligand>
        <name>heme b</name>
        <dbReference type="ChEBI" id="CHEBI:60344"/>
        <label>b562</label>
    </ligand>
    <ligandPart>
        <name>Fe</name>
        <dbReference type="ChEBI" id="CHEBI:18248"/>
    </ligandPart>
</feature>
<feature type="binding site" description="axial binding residue" evidence="2">
    <location>
        <position position="196"/>
    </location>
    <ligand>
        <name>heme b</name>
        <dbReference type="ChEBI" id="CHEBI:60344"/>
        <label>b566</label>
    </ligand>
    <ligandPart>
        <name>Fe</name>
        <dbReference type="ChEBI" id="CHEBI:18248"/>
    </ligandPart>
</feature>
<proteinExistence type="inferred from homology"/>
<organism>
    <name type="scientific">Sciurus niger</name>
    <name type="common">Eastern fox squirrel</name>
    <dbReference type="NCBI Taxonomy" id="34861"/>
    <lineage>
        <taxon>Eukaryota</taxon>
        <taxon>Metazoa</taxon>
        <taxon>Chordata</taxon>
        <taxon>Craniata</taxon>
        <taxon>Vertebrata</taxon>
        <taxon>Euteleostomi</taxon>
        <taxon>Mammalia</taxon>
        <taxon>Eutheria</taxon>
        <taxon>Euarchontoglires</taxon>
        <taxon>Glires</taxon>
        <taxon>Rodentia</taxon>
        <taxon>Sciuromorpha</taxon>
        <taxon>Sciuridae</taxon>
        <taxon>Sciurinae</taxon>
        <taxon>Sciurini</taxon>
        <taxon>Sciurus</taxon>
    </lineage>
</organism>
<gene>
    <name type="primary">MT-CYB</name>
    <name type="synonym">COB</name>
    <name type="synonym">CYTB</name>
    <name type="synonym">MTCYB</name>
</gene>
<geneLocation type="mitochondrion"/>
<accession>Q35895</accession>
<name>CYB_SCINI</name>
<comment type="function">
    <text evidence="2">Component of the ubiquinol-cytochrome c reductase complex (complex III or cytochrome b-c1 complex) that is part of the mitochondrial respiratory chain. The b-c1 complex mediates electron transfer from ubiquinol to cytochrome c. Contributes to the generation of a proton gradient across the mitochondrial membrane that is then used for ATP synthesis.</text>
</comment>
<comment type="cofactor">
    <cofactor evidence="2">
        <name>heme b</name>
        <dbReference type="ChEBI" id="CHEBI:60344"/>
    </cofactor>
    <text evidence="2">Binds 2 heme b groups non-covalently.</text>
</comment>
<comment type="subunit">
    <text evidence="2">The cytochrome bc1 complex contains 11 subunits: 3 respiratory subunits (MT-CYB, CYC1 and UQCRFS1), 2 core proteins (UQCRC1 and UQCRC2) and 6 low-molecular weight proteins (UQCRH/QCR6, UQCRB/QCR7, UQCRQ/QCR8, UQCR10/QCR9, UQCR11/QCR10 and a cleavage product of UQCRFS1). This cytochrome bc1 complex then forms a dimer.</text>
</comment>
<comment type="subcellular location">
    <subcellularLocation>
        <location evidence="2">Mitochondrion inner membrane</location>
        <topology evidence="2">Multi-pass membrane protein</topology>
    </subcellularLocation>
</comment>
<comment type="miscellaneous">
    <text evidence="1">Heme 1 (or BL or b562) is low-potential and absorbs at about 562 nm, and heme 2 (or BH or b566) is high-potential and absorbs at about 566 nm.</text>
</comment>
<comment type="similarity">
    <text evidence="3 4">Belongs to the cytochrome b family.</text>
</comment>
<comment type="caution">
    <text evidence="2">The full-length protein contains only eight transmembrane helices, not nine as predicted by bioinformatics tools.</text>
</comment>
<reference key="1">
    <citation type="journal article" date="1995" name="Mol. Phylogenet. Evol.">
        <title>Phylogeny of six Sciurus aberti subspecies based on nucleotide sequences of cytochrome b.</title>
        <authorList>
            <person name="Wettstein P.J."/>
            <person name="Strausbauch M."/>
            <person name="Lamb T."/>
            <person name="States J."/>
            <person name="Chakraborty R."/>
            <person name="Jin L."/>
            <person name="Riblet R."/>
        </authorList>
    </citation>
    <scope>NUCLEOTIDE SEQUENCE [GENOMIC DNA]</scope>
</reference>